<keyword id="KW-0233">DNA recombination</keyword>
<keyword id="KW-0238">DNA-binding</keyword>
<keyword id="KW-1185">Reference proteome</keyword>
<accession>P77698</accession>
<accession>Q2MBN7</accession>
<evidence type="ECO:0000255" key="1">
    <source>
        <dbReference type="PROSITE-ProRule" id="PRU01072"/>
    </source>
</evidence>
<evidence type="ECO:0000255" key="2">
    <source>
        <dbReference type="PROSITE-ProRule" id="PRU01073"/>
    </source>
</evidence>
<feature type="chain" id="PRO_0000168651" description="Uncharacterized protein YbcK">
    <location>
        <begin position="1"/>
        <end position="508"/>
    </location>
</feature>
<feature type="domain" description="Resolvase/invertase-type recombinase catalytic" evidence="1">
    <location>
        <begin position="3"/>
        <end position="163"/>
    </location>
</feature>
<feature type="DNA-binding region" description="Recombinase" evidence="2">
    <location>
        <begin position="175"/>
        <end position="290"/>
    </location>
</feature>
<feature type="active site" description="O-(5'-phospho-DNA)-serine intermediate" evidence="1">
    <location>
        <position position="11"/>
    </location>
</feature>
<sequence length="508" mass="57527">MKKAIAYMRFSSPGQMSGDSLNRQRRLIAEWLKVNSDYYLDTITYEDLGLSAFKGKHAQSGAFSEFLDAIEHGYILPGTTLLVESLDRLSREKVGEAIERLKLILNHGIDVITLCDNTVYNIDSLNEPYSLIKAILIAQRANEESEIKSSRVKLSWKKKRQDALESGTIMTASCPRWLSLDDKRTAFVPDPDRVKTIELIFKLRMERRSLNAIAKYLNDHAVKNFSGKESAWGPSVIEKLLANKALIGICVPSYRARGKGISEIAGYYPRVISDDLFYAVQEIRLAPFGISNSSKNPMLINLLRTVMKCEACGNTMIVHAVSGSLHGYYVCPMRRLHRCDRPSIKRDLVDYNIINELLFNCSKIQPVENKKDANETLELKIIELQMKINNLIVALSVAPEVTAIAEKIRLLDKELRRASVSLKTLKSKGVNSFSDFYAIDLTSKNGRELCRTLAYKTFEKIIINTDNKTCDIYFMNGIVFKHYPLMKVISAQQAISALKYMVDGEIYF</sequence>
<organism>
    <name type="scientific">Escherichia coli (strain K12)</name>
    <dbReference type="NCBI Taxonomy" id="83333"/>
    <lineage>
        <taxon>Bacteria</taxon>
        <taxon>Pseudomonadati</taxon>
        <taxon>Pseudomonadota</taxon>
        <taxon>Gammaproteobacteria</taxon>
        <taxon>Enterobacterales</taxon>
        <taxon>Enterobacteriaceae</taxon>
        <taxon>Escherichia</taxon>
    </lineage>
</organism>
<reference key="1">
    <citation type="submission" date="1997-01" db="EMBL/GenBank/DDBJ databases">
        <title>Sequence of minutes 4-25 of Escherichia coli.</title>
        <authorList>
            <person name="Chung E."/>
            <person name="Allen E."/>
            <person name="Araujo R."/>
            <person name="Aparicio A.M."/>
            <person name="Davis K."/>
            <person name="Duncan M."/>
            <person name="Federspiel N."/>
            <person name="Hyman R."/>
            <person name="Kalman S."/>
            <person name="Komp C."/>
            <person name="Kurdi O."/>
            <person name="Lew H."/>
            <person name="Lin D."/>
            <person name="Namath A."/>
            <person name="Oefner P."/>
            <person name="Roberts D."/>
            <person name="Schramm S."/>
            <person name="Davis R.W."/>
        </authorList>
    </citation>
    <scope>NUCLEOTIDE SEQUENCE [LARGE SCALE GENOMIC DNA]</scope>
    <source>
        <strain>K12 / MG1655 / ATCC 47076</strain>
    </source>
</reference>
<reference key="2">
    <citation type="journal article" date="1997" name="Science">
        <title>The complete genome sequence of Escherichia coli K-12.</title>
        <authorList>
            <person name="Blattner F.R."/>
            <person name="Plunkett G. III"/>
            <person name="Bloch C.A."/>
            <person name="Perna N.T."/>
            <person name="Burland V."/>
            <person name="Riley M."/>
            <person name="Collado-Vides J."/>
            <person name="Glasner J.D."/>
            <person name="Rode C.K."/>
            <person name="Mayhew G.F."/>
            <person name="Gregor J."/>
            <person name="Davis N.W."/>
            <person name="Kirkpatrick H.A."/>
            <person name="Goeden M.A."/>
            <person name="Rose D.J."/>
            <person name="Mau B."/>
            <person name="Shao Y."/>
        </authorList>
    </citation>
    <scope>NUCLEOTIDE SEQUENCE [LARGE SCALE GENOMIC DNA]</scope>
    <source>
        <strain>K12 / MG1655 / ATCC 47076</strain>
    </source>
</reference>
<reference key="3">
    <citation type="journal article" date="2006" name="Mol. Syst. Biol.">
        <title>Highly accurate genome sequences of Escherichia coli K-12 strains MG1655 and W3110.</title>
        <authorList>
            <person name="Hayashi K."/>
            <person name="Morooka N."/>
            <person name="Yamamoto Y."/>
            <person name="Fujita K."/>
            <person name="Isono K."/>
            <person name="Choi S."/>
            <person name="Ohtsubo E."/>
            <person name="Baba T."/>
            <person name="Wanner B.L."/>
            <person name="Mori H."/>
            <person name="Horiuchi T."/>
        </authorList>
    </citation>
    <scope>NUCLEOTIDE SEQUENCE [LARGE SCALE GENOMIC DNA]</scope>
    <source>
        <strain>K12 / W3110 / ATCC 27325 / DSM 5911</strain>
    </source>
</reference>
<protein>
    <recommendedName>
        <fullName>Uncharacterized protein YbcK</fullName>
    </recommendedName>
</protein>
<name>YBCK_ECOLI</name>
<comment type="miscellaneous">
    <text>Encoded by the cryptic lambdoid prophage DLP12.</text>
</comment>
<proteinExistence type="predicted"/>
<dbReference type="EMBL" id="U82598">
    <property type="protein sequence ID" value="AAB40741.1"/>
    <property type="molecule type" value="Genomic_DNA"/>
</dbReference>
<dbReference type="EMBL" id="U00096">
    <property type="protein sequence ID" value="AAC73645.1"/>
    <property type="molecule type" value="Genomic_DNA"/>
</dbReference>
<dbReference type="EMBL" id="AP009048">
    <property type="protein sequence ID" value="BAE76319.1"/>
    <property type="molecule type" value="Genomic_DNA"/>
</dbReference>
<dbReference type="PIR" id="F64786">
    <property type="entry name" value="F64786"/>
</dbReference>
<dbReference type="RefSeq" id="NP_415076.1">
    <property type="nucleotide sequence ID" value="NC_000913.3"/>
</dbReference>
<dbReference type="RefSeq" id="WP_000709082.1">
    <property type="nucleotide sequence ID" value="NZ_LN832404.1"/>
</dbReference>
<dbReference type="SMR" id="P77698"/>
<dbReference type="BioGRID" id="4261008">
    <property type="interactions" value="48"/>
</dbReference>
<dbReference type="DIP" id="DIP-11332N"/>
<dbReference type="FunCoup" id="P77698">
    <property type="interactions" value="27"/>
</dbReference>
<dbReference type="IntAct" id="P77698">
    <property type="interactions" value="2"/>
</dbReference>
<dbReference type="STRING" id="511145.b0544"/>
<dbReference type="PaxDb" id="511145-b0544"/>
<dbReference type="DNASU" id="945166"/>
<dbReference type="EnsemblBacteria" id="AAC73645">
    <property type="protein sequence ID" value="AAC73645"/>
    <property type="gene ID" value="b0544"/>
</dbReference>
<dbReference type="GeneID" id="945166"/>
<dbReference type="KEGG" id="ecj:JW0532"/>
<dbReference type="KEGG" id="eco:b0544"/>
<dbReference type="KEGG" id="ecoc:C3026_02680"/>
<dbReference type="PATRIC" id="fig|1411691.4.peg.1733"/>
<dbReference type="EchoBASE" id="EB3392"/>
<dbReference type="eggNOG" id="COG1961">
    <property type="taxonomic scope" value="Bacteria"/>
</dbReference>
<dbReference type="HOGENOM" id="CLU_030020_3_1_6"/>
<dbReference type="InParanoid" id="P77698"/>
<dbReference type="OMA" id="KPFDKWM"/>
<dbReference type="OrthoDB" id="9791494at2"/>
<dbReference type="PhylomeDB" id="P77698"/>
<dbReference type="BioCyc" id="EcoCyc:G6300-MONOMER"/>
<dbReference type="PRO" id="PR:P77698"/>
<dbReference type="Proteomes" id="UP000000625">
    <property type="component" value="Chromosome"/>
</dbReference>
<dbReference type="GO" id="GO:0003677">
    <property type="term" value="F:DNA binding"/>
    <property type="evidence" value="ECO:0007669"/>
    <property type="project" value="UniProtKB-KW"/>
</dbReference>
<dbReference type="GO" id="GO:0000150">
    <property type="term" value="F:DNA strand exchange activity"/>
    <property type="evidence" value="ECO:0000318"/>
    <property type="project" value="GO_Central"/>
</dbReference>
<dbReference type="GO" id="GO:0006310">
    <property type="term" value="P:DNA recombination"/>
    <property type="evidence" value="ECO:0000318"/>
    <property type="project" value="GO_Central"/>
</dbReference>
<dbReference type="CDD" id="cd00338">
    <property type="entry name" value="Ser_Recombinase"/>
    <property type="match status" value="1"/>
</dbReference>
<dbReference type="Gene3D" id="3.90.1750.20">
    <property type="entry name" value="Putative Large Serine Recombinase, Chain B, Domain 2"/>
    <property type="match status" value="1"/>
</dbReference>
<dbReference type="Gene3D" id="3.40.50.1390">
    <property type="entry name" value="Resolvase, N-terminal catalytic domain"/>
    <property type="match status" value="1"/>
</dbReference>
<dbReference type="InterPro" id="IPR038109">
    <property type="entry name" value="DNA_bind_recomb_sf"/>
</dbReference>
<dbReference type="InterPro" id="IPR011109">
    <property type="entry name" value="DNA_bind_recombinase_dom"/>
</dbReference>
<dbReference type="InterPro" id="IPR006119">
    <property type="entry name" value="Resolv_N"/>
</dbReference>
<dbReference type="InterPro" id="IPR036162">
    <property type="entry name" value="Resolvase-like_N_sf"/>
</dbReference>
<dbReference type="InterPro" id="IPR050639">
    <property type="entry name" value="SSR_resolvase"/>
</dbReference>
<dbReference type="InterPro" id="IPR025827">
    <property type="entry name" value="Zn_ribbon_recom_dom"/>
</dbReference>
<dbReference type="PANTHER" id="PTHR30461">
    <property type="entry name" value="DNA-INVERTASE FROM LAMBDOID PROPHAGE"/>
    <property type="match status" value="1"/>
</dbReference>
<dbReference type="PANTHER" id="PTHR30461:SF2">
    <property type="entry name" value="SERINE RECOMBINASE PINE-RELATED"/>
    <property type="match status" value="1"/>
</dbReference>
<dbReference type="Pfam" id="PF07508">
    <property type="entry name" value="Recombinase"/>
    <property type="match status" value="1"/>
</dbReference>
<dbReference type="Pfam" id="PF00239">
    <property type="entry name" value="Resolvase"/>
    <property type="match status" value="1"/>
</dbReference>
<dbReference type="Pfam" id="PF13408">
    <property type="entry name" value="Zn_ribbon_recom"/>
    <property type="match status" value="1"/>
</dbReference>
<dbReference type="SMART" id="SM00857">
    <property type="entry name" value="Resolvase"/>
    <property type="match status" value="1"/>
</dbReference>
<dbReference type="SUPFAM" id="SSF53041">
    <property type="entry name" value="Resolvase-like"/>
    <property type="match status" value="1"/>
</dbReference>
<dbReference type="PROSITE" id="PS51737">
    <property type="entry name" value="RECOMBINASE_DNA_BIND"/>
    <property type="match status" value="1"/>
</dbReference>
<dbReference type="PROSITE" id="PS51736">
    <property type="entry name" value="RECOMBINASES_3"/>
    <property type="match status" value="1"/>
</dbReference>
<gene>
    <name type="primary">ybcK</name>
    <name type="ordered locus">b0544</name>
    <name type="ordered locus">JW0532</name>
</gene>